<name>UL34_HCMVM</name>
<protein>
    <recommendedName>
        <fullName>Transcriptional regulator UL34</fullName>
    </recommendedName>
</protein>
<dbReference type="EMBL" id="AY446894">
    <property type="protein sequence ID" value="AAR31599.1"/>
    <property type="molecule type" value="Genomic_DNA"/>
</dbReference>
<dbReference type="RefSeq" id="YP_081493.1">
    <property type="nucleotide sequence ID" value="NC_006273.2"/>
</dbReference>
<dbReference type="DNASU" id="3077500"/>
<dbReference type="GeneID" id="3077500"/>
<dbReference type="KEGG" id="vg:3077500"/>
<dbReference type="Reactome" id="R-HSA-9609690">
    <property type="pathway name" value="HCMV Early Events"/>
</dbReference>
<dbReference type="Proteomes" id="UP000000938">
    <property type="component" value="Segment"/>
</dbReference>
<dbReference type="GO" id="GO:0042025">
    <property type="term" value="C:host cell nucleus"/>
    <property type="evidence" value="ECO:0007669"/>
    <property type="project" value="UniProtKB-SubCell"/>
</dbReference>
<sequence length="407" mass="45403">MNFIITTRDFSNDDSVLRAAEMRDNVAGSISKAYKGTVRAEGKKKLLLKHLPVPPGGCSRRNSNLFVFCTERDYRKFHQGIAQLKRAPAELDPHEIQQVTASIRCRLQPSLREPPTPADELQTAVSRVCALFNQLVFTAQLRHYCEHQDKVVSYARDELTKRCGEKSALGVEVHQLVALLPHERHRELCHVLIGLLHQTPHMWARSIRLIGHLRHYLQNSFLHLLMNSGLDIAQVFDGCYHSEAYRMLFQIGHTDSVSAALELSHSAAAGPPEADENNDEGEEDDDELRHSDPAPLHDSKKPRNARRPRTRVPPHEQKPEENEEEEEELFPSCKATAAFLRAEPSVSNDDGNGGERCDTLATALRHRADEEDGPLASQTSVRVAATPSPSVTSALTPVTSPITPLCI</sequence>
<organismHost>
    <name type="scientific">Homo sapiens</name>
    <name type="common">Human</name>
    <dbReference type="NCBI Taxonomy" id="9606"/>
</organismHost>
<comment type="function">
    <text evidence="1">Acts as a transcriptional repressor of the US3 gene expression through a specific DNA sequence named the transcriptional repressive element (tre).</text>
</comment>
<comment type="subcellular location">
    <subcellularLocation>
        <location evidence="1">Host nucleus</location>
    </subcellularLocation>
</comment>
<comment type="similarity">
    <text evidence="3">Belongs to the HHV-5 UL34 protein family.</text>
</comment>
<organism>
    <name type="scientific">Human cytomegalovirus (strain Merlin)</name>
    <name type="common">HHV-5</name>
    <name type="synonym">Human herpesvirus 5</name>
    <dbReference type="NCBI Taxonomy" id="295027"/>
    <lineage>
        <taxon>Viruses</taxon>
        <taxon>Duplodnaviria</taxon>
        <taxon>Heunggongvirae</taxon>
        <taxon>Peploviricota</taxon>
        <taxon>Herviviricetes</taxon>
        <taxon>Herpesvirales</taxon>
        <taxon>Orthoherpesviridae</taxon>
        <taxon>Betaherpesvirinae</taxon>
        <taxon>Cytomegalovirus</taxon>
        <taxon>Cytomegalovirus humanbeta5</taxon>
        <taxon>Human cytomegalovirus</taxon>
    </lineage>
</organism>
<feature type="chain" id="PRO_0000416717" description="Transcriptional regulator UL34">
    <location>
        <begin position="1"/>
        <end position="407"/>
    </location>
</feature>
<feature type="region of interest" description="Disordered" evidence="2">
    <location>
        <begin position="268"/>
        <end position="330"/>
    </location>
</feature>
<feature type="compositionally biased region" description="Acidic residues" evidence="2">
    <location>
        <begin position="273"/>
        <end position="286"/>
    </location>
</feature>
<feature type="compositionally biased region" description="Basic and acidic residues" evidence="2">
    <location>
        <begin position="287"/>
        <end position="301"/>
    </location>
</feature>
<feature type="compositionally biased region" description="Basic residues" evidence="2">
    <location>
        <begin position="302"/>
        <end position="312"/>
    </location>
</feature>
<keyword id="KW-1048">Host nucleus</keyword>
<keyword id="KW-1185">Reference proteome</keyword>
<gene>
    <name type="primary">UL34</name>
</gene>
<accession>F5HC16</accession>
<reference key="1">
    <citation type="journal article" date="2004" name="J. Gen. Virol.">
        <title>Genetic content of wild-type human cytomegalovirus.</title>
        <authorList>
            <person name="Dolan A."/>
            <person name="Cunningham C."/>
            <person name="Hector R.D."/>
            <person name="Hassan-Walker A.F."/>
            <person name="Lee L."/>
            <person name="Addison C."/>
            <person name="Dargan D.J."/>
            <person name="McGeoch D.J."/>
            <person name="Gatherer D."/>
            <person name="Emery V.C."/>
            <person name="Griffiths P.D."/>
            <person name="Sinzger C."/>
            <person name="McSharry B.P."/>
            <person name="Wilkinson G.W.G."/>
            <person name="Davison A.J."/>
        </authorList>
    </citation>
    <scope>NUCLEOTIDE SEQUENCE [LARGE SCALE GENOMIC DNA]</scope>
</reference>
<proteinExistence type="inferred from homology"/>
<evidence type="ECO:0000250" key="1"/>
<evidence type="ECO:0000256" key="2">
    <source>
        <dbReference type="SAM" id="MobiDB-lite"/>
    </source>
</evidence>
<evidence type="ECO:0000305" key="3"/>